<evidence type="ECO:0000250" key="1"/>
<evidence type="ECO:0000305" key="2"/>
<protein>
    <recommendedName>
        <fullName>Phospholysine phosphohistidine inorganic pyrophosphate phosphatase</fullName>
        <ecNumber>3.1.3.-</ecNumber>
        <ecNumber>3.6.1.1</ecNumber>
    </recommendedName>
</protein>
<sequence length="270" mass="29190">MAAWAERLSGVRGVLLDISGVLYDSGTGGGAAIAGSVEAVARLKRSPLKVRFCTNESQKSRRELVGVLQRLGFDISEGEVTAPAPATCQILKERGLRPHLLIHEGVRSEFDDIDMSNPNCVVIADAGEGFSYQNMNRAFQVLMELENPVLISLGKGRYYKETSGLMLDVGGYMKALEYACGIEAEVVGKPSPEFFRSALQAIGVEAHQAIMIGDDIVGDVGGAQQCGMRALQVRTGKFRPGDEHHPEVRADGYVDNLAEAVDLLLQHMDK</sequence>
<reference key="1">
    <citation type="journal article" date="2004" name="Genome Res.">
        <title>The status, quality, and expansion of the NIH full-length cDNA project: the Mammalian Gene Collection (MGC).</title>
        <authorList>
            <consortium name="The MGC Project Team"/>
        </authorList>
    </citation>
    <scope>NUCLEOTIDE SEQUENCE [LARGE SCALE MRNA]</scope>
    <source>
        <tissue>Kidney</tissue>
    </source>
</reference>
<organism>
    <name type="scientific">Rattus norvegicus</name>
    <name type="common">Rat</name>
    <dbReference type="NCBI Taxonomy" id="10116"/>
    <lineage>
        <taxon>Eukaryota</taxon>
        <taxon>Metazoa</taxon>
        <taxon>Chordata</taxon>
        <taxon>Craniata</taxon>
        <taxon>Vertebrata</taxon>
        <taxon>Euteleostomi</taxon>
        <taxon>Mammalia</taxon>
        <taxon>Eutheria</taxon>
        <taxon>Euarchontoglires</taxon>
        <taxon>Glires</taxon>
        <taxon>Rodentia</taxon>
        <taxon>Myomorpha</taxon>
        <taxon>Muroidea</taxon>
        <taxon>Muridae</taxon>
        <taxon>Murinae</taxon>
        <taxon>Rattus</taxon>
    </lineage>
</organism>
<dbReference type="EC" id="3.1.3.-"/>
<dbReference type="EC" id="3.6.1.1"/>
<dbReference type="EMBL" id="BC088448">
    <property type="protein sequence ID" value="AAH88448.1"/>
    <property type="molecule type" value="mRNA"/>
</dbReference>
<dbReference type="RefSeq" id="NP_001009706.1">
    <property type="nucleotide sequence ID" value="NM_001009706.1"/>
</dbReference>
<dbReference type="SMR" id="Q5I0D5"/>
<dbReference type="FunCoup" id="Q5I0D5">
    <property type="interactions" value="298"/>
</dbReference>
<dbReference type="STRING" id="10116.ENSRNOP00000022971"/>
<dbReference type="PhosphoSitePlus" id="Q5I0D5"/>
<dbReference type="PaxDb" id="10116-ENSRNOP00000022971"/>
<dbReference type="GeneID" id="361663"/>
<dbReference type="KEGG" id="rno:361663"/>
<dbReference type="UCSC" id="RGD:1359187">
    <property type="organism name" value="rat"/>
</dbReference>
<dbReference type="AGR" id="RGD:1359187"/>
<dbReference type="CTD" id="64077"/>
<dbReference type="RGD" id="1359187">
    <property type="gene designation" value="Lhpp"/>
</dbReference>
<dbReference type="VEuPathDB" id="HostDB:ENSRNOG00000017097"/>
<dbReference type="eggNOG" id="KOG3040">
    <property type="taxonomic scope" value="Eukaryota"/>
</dbReference>
<dbReference type="HOGENOM" id="CLU_043473_4_1_1"/>
<dbReference type="InParanoid" id="Q5I0D5"/>
<dbReference type="PhylomeDB" id="Q5I0D5"/>
<dbReference type="TreeFam" id="TF314344"/>
<dbReference type="Reactome" id="R-RNO-71737">
    <property type="pathway name" value="Pyrophosphate hydrolysis"/>
</dbReference>
<dbReference type="PRO" id="PR:Q5I0D5"/>
<dbReference type="Proteomes" id="UP000002494">
    <property type="component" value="Chromosome 1"/>
</dbReference>
<dbReference type="Bgee" id="ENSRNOG00000017097">
    <property type="expression patterns" value="Expressed in kidney and 20 other cell types or tissues"/>
</dbReference>
<dbReference type="GO" id="GO:0005737">
    <property type="term" value="C:cytoplasm"/>
    <property type="evidence" value="ECO:0000318"/>
    <property type="project" value="GO_Central"/>
</dbReference>
<dbReference type="GO" id="GO:0005829">
    <property type="term" value="C:cytosol"/>
    <property type="evidence" value="ECO:0000250"/>
    <property type="project" value="UniProtKB"/>
</dbReference>
<dbReference type="GO" id="GO:0005634">
    <property type="term" value="C:nucleus"/>
    <property type="evidence" value="ECO:0000250"/>
    <property type="project" value="UniProtKB"/>
</dbReference>
<dbReference type="GO" id="GO:0004427">
    <property type="term" value="F:inorganic diphosphate phosphatase activity"/>
    <property type="evidence" value="ECO:0000250"/>
    <property type="project" value="UniProtKB"/>
</dbReference>
<dbReference type="GO" id="GO:0046872">
    <property type="term" value="F:metal ion binding"/>
    <property type="evidence" value="ECO:0007669"/>
    <property type="project" value="UniProtKB-KW"/>
</dbReference>
<dbReference type="GO" id="GO:0016791">
    <property type="term" value="F:phosphatase activity"/>
    <property type="evidence" value="ECO:0000318"/>
    <property type="project" value="GO_Central"/>
</dbReference>
<dbReference type="GO" id="GO:0042803">
    <property type="term" value="F:protein homodimerization activity"/>
    <property type="evidence" value="ECO:0000266"/>
    <property type="project" value="RGD"/>
</dbReference>
<dbReference type="GO" id="GO:0006796">
    <property type="term" value="P:phosphate-containing compound metabolic process"/>
    <property type="evidence" value="ECO:0000250"/>
    <property type="project" value="UniProtKB"/>
</dbReference>
<dbReference type="CDD" id="cd07509">
    <property type="entry name" value="HAD_PPase"/>
    <property type="match status" value="1"/>
</dbReference>
<dbReference type="FunFam" id="3.40.50.1000:FF:000051">
    <property type="entry name" value="Phospholysine phosphohistidine inorganic pyrophosphate phosphatase"/>
    <property type="match status" value="1"/>
</dbReference>
<dbReference type="Gene3D" id="3.40.50.1000">
    <property type="entry name" value="HAD superfamily/HAD-like"/>
    <property type="match status" value="2"/>
</dbReference>
<dbReference type="InterPro" id="IPR036412">
    <property type="entry name" value="HAD-like_sf"/>
</dbReference>
<dbReference type="InterPro" id="IPR006357">
    <property type="entry name" value="HAD-SF_hydro_IIA"/>
</dbReference>
<dbReference type="InterPro" id="IPR023214">
    <property type="entry name" value="HAD_sf"/>
</dbReference>
<dbReference type="InterPro" id="IPR006355">
    <property type="entry name" value="LHPP/HDHD2"/>
</dbReference>
<dbReference type="NCBIfam" id="TIGR01460">
    <property type="entry name" value="HAD-SF-IIA"/>
    <property type="match status" value="1"/>
</dbReference>
<dbReference type="NCBIfam" id="TIGR01458">
    <property type="entry name" value="HAD-SF-IIA-hyp3"/>
    <property type="match status" value="1"/>
</dbReference>
<dbReference type="PANTHER" id="PTHR19288">
    <property type="entry name" value="4-NITROPHENYLPHOSPHATASE-RELATED"/>
    <property type="match status" value="1"/>
</dbReference>
<dbReference type="PANTHER" id="PTHR19288:SF44">
    <property type="entry name" value="PHOSPHOLYSINE PHOSPHOHISTIDINE INORGANIC PYROPHOSPHATE PHOSPHATASE"/>
    <property type="match status" value="1"/>
</dbReference>
<dbReference type="Pfam" id="PF13344">
    <property type="entry name" value="Hydrolase_6"/>
    <property type="match status" value="1"/>
</dbReference>
<dbReference type="Pfam" id="PF13242">
    <property type="entry name" value="Hydrolase_like"/>
    <property type="match status" value="1"/>
</dbReference>
<dbReference type="SUPFAM" id="SSF56784">
    <property type="entry name" value="HAD-like"/>
    <property type="match status" value="1"/>
</dbReference>
<proteinExistence type="evidence at transcript level"/>
<name>LHPP_RAT</name>
<comment type="function">
    <text evidence="1">Phosphatase that hydrolyzes imidodiphosphate, 3-phosphohistidine and 6-phospholysine. Has broad substrate specificity and can also hydrolyze inorganic diphosphate, but with lower efficiency (By similarity).</text>
</comment>
<comment type="catalytic activity">
    <reaction>
        <text>diphosphate + H2O = 2 phosphate + H(+)</text>
        <dbReference type="Rhea" id="RHEA:24576"/>
        <dbReference type="ChEBI" id="CHEBI:15377"/>
        <dbReference type="ChEBI" id="CHEBI:15378"/>
        <dbReference type="ChEBI" id="CHEBI:33019"/>
        <dbReference type="ChEBI" id="CHEBI:43474"/>
        <dbReference type="EC" id="3.6.1.1"/>
    </reaction>
</comment>
<comment type="cofactor">
    <cofactor evidence="1">
        <name>Mg(2+)</name>
        <dbReference type="ChEBI" id="CHEBI:18420"/>
    </cofactor>
    <text evidence="1">Binds 1 Mg(2+) ion per subunit.</text>
</comment>
<comment type="subunit">
    <text evidence="1">Homodimer.</text>
</comment>
<comment type="subcellular location">
    <subcellularLocation>
        <location evidence="1">Cytoplasm</location>
    </subcellularLocation>
    <subcellularLocation>
        <location evidence="1">Nucleus</location>
    </subcellularLocation>
</comment>
<comment type="similarity">
    <text evidence="2">Belongs to the HAD-like hydrolase superfamily.</text>
</comment>
<keyword id="KW-0963">Cytoplasm</keyword>
<keyword id="KW-0378">Hydrolase</keyword>
<keyword id="KW-0460">Magnesium</keyword>
<keyword id="KW-0479">Metal-binding</keyword>
<keyword id="KW-0539">Nucleus</keyword>
<keyword id="KW-1185">Reference proteome</keyword>
<feature type="chain" id="PRO_0000305076" description="Phospholysine phosphohistidine inorganic pyrophosphate phosphatase">
    <location>
        <begin position="1"/>
        <end position="270"/>
    </location>
</feature>
<feature type="binding site" evidence="1">
    <location>
        <begin position="17"/>
        <end position="19"/>
    </location>
    <ligand>
        <name>substrate</name>
    </ligand>
</feature>
<feature type="binding site" evidence="1">
    <location>
        <position position="17"/>
    </location>
    <ligand>
        <name>Mg(2+)</name>
        <dbReference type="ChEBI" id="CHEBI:18420"/>
    </ligand>
</feature>
<feature type="binding site" evidence="1">
    <location>
        <position position="19"/>
    </location>
    <ligand>
        <name>Mg(2+)</name>
        <dbReference type="ChEBI" id="CHEBI:18420"/>
    </ligand>
</feature>
<feature type="binding site" evidence="1">
    <location>
        <begin position="54"/>
        <end position="55"/>
    </location>
    <ligand>
        <name>substrate</name>
    </ligand>
</feature>
<feature type="binding site" evidence="1">
    <location>
        <position position="189"/>
    </location>
    <ligand>
        <name>substrate</name>
    </ligand>
</feature>
<feature type="binding site" evidence="1">
    <location>
        <position position="214"/>
    </location>
    <ligand>
        <name>Mg(2+)</name>
        <dbReference type="ChEBI" id="CHEBI:18420"/>
    </ligand>
</feature>
<accession>Q5I0D5</accession>
<gene>
    <name type="primary">Lhpp</name>
</gene>